<organism>
    <name type="scientific">Polaromonas naphthalenivorans (strain CJ2)</name>
    <dbReference type="NCBI Taxonomy" id="365044"/>
    <lineage>
        <taxon>Bacteria</taxon>
        <taxon>Pseudomonadati</taxon>
        <taxon>Pseudomonadota</taxon>
        <taxon>Betaproteobacteria</taxon>
        <taxon>Burkholderiales</taxon>
        <taxon>Comamonadaceae</taxon>
        <taxon>Polaromonas</taxon>
    </lineage>
</organism>
<feature type="chain" id="PRO_1000053612" description="Protein GrpE">
    <location>
        <begin position="1"/>
        <end position="189"/>
    </location>
</feature>
<feature type="region of interest" description="Disordered" evidence="2">
    <location>
        <begin position="1"/>
        <end position="35"/>
    </location>
</feature>
<feature type="compositionally biased region" description="Polar residues" evidence="2">
    <location>
        <begin position="1"/>
        <end position="13"/>
    </location>
</feature>
<comment type="function">
    <text evidence="1">Participates actively in the response to hyperosmotic and heat shock by preventing the aggregation of stress-denatured proteins, in association with DnaK and GrpE. It is the nucleotide exchange factor for DnaK and may function as a thermosensor. Unfolded proteins bind initially to DnaJ; upon interaction with the DnaJ-bound protein, DnaK hydrolyzes its bound ATP, resulting in the formation of a stable complex. GrpE releases ADP from DnaK; ATP binding to DnaK triggers the release of the substrate protein, thus completing the reaction cycle. Several rounds of ATP-dependent interactions between DnaJ, DnaK and GrpE are required for fully efficient folding.</text>
</comment>
<comment type="subunit">
    <text evidence="1">Homodimer.</text>
</comment>
<comment type="subcellular location">
    <subcellularLocation>
        <location evidence="1">Cytoplasm</location>
    </subcellularLocation>
</comment>
<comment type="similarity">
    <text evidence="1">Belongs to the GrpE family.</text>
</comment>
<protein>
    <recommendedName>
        <fullName evidence="1">Protein GrpE</fullName>
    </recommendedName>
    <alternativeName>
        <fullName evidence="1">HSP-70 cofactor</fullName>
    </alternativeName>
</protein>
<dbReference type="EMBL" id="CP000529">
    <property type="protein sequence ID" value="ABM36841.1"/>
    <property type="molecule type" value="Genomic_DNA"/>
</dbReference>
<dbReference type="RefSeq" id="WP_011800928.1">
    <property type="nucleotide sequence ID" value="NC_008781.1"/>
</dbReference>
<dbReference type="SMR" id="A1VMG3"/>
<dbReference type="STRING" id="365044.Pnap_1527"/>
<dbReference type="KEGG" id="pna:Pnap_1527"/>
<dbReference type="eggNOG" id="COG0576">
    <property type="taxonomic scope" value="Bacteria"/>
</dbReference>
<dbReference type="HOGENOM" id="CLU_057217_6_0_4"/>
<dbReference type="OrthoDB" id="9789811at2"/>
<dbReference type="Proteomes" id="UP000000644">
    <property type="component" value="Chromosome"/>
</dbReference>
<dbReference type="GO" id="GO:0005829">
    <property type="term" value="C:cytosol"/>
    <property type="evidence" value="ECO:0007669"/>
    <property type="project" value="TreeGrafter"/>
</dbReference>
<dbReference type="GO" id="GO:0000774">
    <property type="term" value="F:adenyl-nucleotide exchange factor activity"/>
    <property type="evidence" value="ECO:0007669"/>
    <property type="project" value="InterPro"/>
</dbReference>
<dbReference type="GO" id="GO:0042803">
    <property type="term" value="F:protein homodimerization activity"/>
    <property type="evidence" value="ECO:0007669"/>
    <property type="project" value="InterPro"/>
</dbReference>
<dbReference type="GO" id="GO:0051087">
    <property type="term" value="F:protein-folding chaperone binding"/>
    <property type="evidence" value="ECO:0007669"/>
    <property type="project" value="InterPro"/>
</dbReference>
<dbReference type="GO" id="GO:0051082">
    <property type="term" value="F:unfolded protein binding"/>
    <property type="evidence" value="ECO:0007669"/>
    <property type="project" value="TreeGrafter"/>
</dbReference>
<dbReference type="GO" id="GO:0006457">
    <property type="term" value="P:protein folding"/>
    <property type="evidence" value="ECO:0007669"/>
    <property type="project" value="InterPro"/>
</dbReference>
<dbReference type="CDD" id="cd00446">
    <property type="entry name" value="GrpE"/>
    <property type="match status" value="1"/>
</dbReference>
<dbReference type="FunFam" id="2.30.22.10:FF:000001">
    <property type="entry name" value="Protein GrpE"/>
    <property type="match status" value="1"/>
</dbReference>
<dbReference type="Gene3D" id="3.90.20.20">
    <property type="match status" value="1"/>
</dbReference>
<dbReference type="Gene3D" id="2.30.22.10">
    <property type="entry name" value="Head domain of nucleotide exchange factor GrpE"/>
    <property type="match status" value="1"/>
</dbReference>
<dbReference type="HAMAP" id="MF_01151">
    <property type="entry name" value="GrpE"/>
    <property type="match status" value="1"/>
</dbReference>
<dbReference type="InterPro" id="IPR000740">
    <property type="entry name" value="GrpE"/>
</dbReference>
<dbReference type="InterPro" id="IPR013805">
    <property type="entry name" value="GrpE_coiled_coil"/>
</dbReference>
<dbReference type="InterPro" id="IPR009012">
    <property type="entry name" value="GrpE_head"/>
</dbReference>
<dbReference type="NCBIfam" id="NF010737">
    <property type="entry name" value="PRK14139.1"/>
    <property type="match status" value="1"/>
</dbReference>
<dbReference type="NCBIfam" id="NF010738">
    <property type="entry name" value="PRK14140.1"/>
    <property type="match status" value="1"/>
</dbReference>
<dbReference type="NCBIfam" id="NF010748">
    <property type="entry name" value="PRK14150.1"/>
    <property type="match status" value="1"/>
</dbReference>
<dbReference type="PANTHER" id="PTHR21237">
    <property type="entry name" value="GRPE PROTEIN"/>
    <property type="match status" value="1"/>
</dbReference>
<dbReference type="PANTHER" id="PTHR21237:SF23">
    <property type="entry name" value="GRPE PROTEIN HOMOLOG, MITOCHONDRIAL"/>
    <property type="match status" value="1"/>
</dbReference>
<dbReference type="Pfam" id="PF01025">
    <property type="entry name" value="GrpE"/>
    <property type="match status" value="1"/>
</dbReference>
<dbReference type="PRINTS" id="PR00773">
    <property type="entry name" value="GRPEPROTEIN"/>
</dbReference>
<dbReference type="SUPFAM" id="SSF58014">
    <property type="entry name" value="Coiled-coil domain of nucleotide exchange factor GrpE"/>
    <property type="match status" value="1"/>
</dbReference>
<dbReference type="SUPFAM" id="SSF51064">
    <property type="entry name" value="Head domain of nucleotide exchange factor GrpE"/>
    <property type="match status" value="1"/>
</dbReference>
<dbReference type="PROSITE" id="PS01071">
    <property type="entry name" value="GRPE"/>
    <property type="match status" value="1"/>
</dbReference>
<gene>
    <name evidence="1" type="primary">grpE</name>
    <name type="ordered locus">Pnap_1527</name>
</gene>
<name>GRPE_POLNA</name>
<sequence length="189" mass="20559">MSENKQPEQNQDLTGEPSPEELEAAQAADEFDAMNAASEAQAQLAVLQAKNTELSDNYLRAKAEAENARRRAEDEISKARKFALESFAESLLPVLDSLEAGLNMKEATLEQLREGSQATLKQLKAALERNKVIEINPVAGSKFDPHQHQAISMVPAAQEANTVVAVLQKGYLIAERVLRPALVTVAAPQ</sequence>
<reference key="1">
    <citation type="journal article" date="2009" name="Environ. Microbiol.">
        <title>The genome of Polaromonas naphthalenivorans strain CJ2, isolated from coal tar-contaminated sediment, reveals physiological and metabolic versatility and evolution through extensive horizontal gene transfer.</title>
        <authorList>
            <person name="Yagi J.M."/>
            <person name="Sims D."/>
            <person name="Brettin T."/>
            <person name="Bruce D."/>
            <person name="Madsen E.L."/>
        </authorList>
    </citation>
    <scope>NUCLEOTIDE SEQUENCE [LARGE SCALE GENOMIC DNA]</scope>
    <source>
        <strain>CJ2</strain>
    </source>
</reference>
<accession>A1VMG3</accession>
<proteinExistence type="inferred from homology"/>
<keyword id="KW-0143">Chaperone</keyword>
<keyword id="KW-0963">Cytoplasm</keyword>
<keyword id="KW-1185">Reference proteome</keyword>
<keyword id="KW-0346">Stress response</keyword>
<evidence type="ECO:0000255" key="1">
    <source>
        <dbReference type="HAMAP-Rule" id="MF_01151"/>
    </source>
</evidence>
<evidence type="ECO:0000256" key="2">
    <source>
        <dbReference type="SAM" id="MobiDB-lite"/>
    </source>
</evidence>